<name>CFI1_CAEEL</name>
<organism>
    <name type="scientific">Caenorhabditis elegans</name>
    <dbReference type="NCBI Taxonomy" id="6239"/>
    <lineage>
        <taxon>Eukaryota</taxon>
        <taxon>Metazoa</taxon>
        <taxon>Ecdysozoa</taxon>
        <taxon>Nematoda</taxon>
        <taxon>Chromadorea</taxon>
        <taxon>Rhabditida</taxon>
        <taxon>Rhabditina</taxon>
        <taxon>Rhabditomorpha</taxon>
        <taxon>Rhabditoidea</taxon>
        <taxon>Rhabditidae</taxon>
        <taxon>Peloderinae</taxon>
        <taxon>Caenorhabditis</taxon>
    </lineage>
</organism>
<evidence type="ECO:0000255" key="1">
    <source>
        <dbReference type="PROSITE-ProRule" id="PRU00355"/>
    </source>
</evidence>
<evidence type="ECO:0000255" key="2">
    <source>
        <dbReference type="PROSITE-ProRule" id="PRU00819"/>
    </source>
</evidence>
<evidence type="ECO:0000256" key="3">
    <source>
        <dbReference type="SAM" id="MobiDB-lite"/>
    </source>
</evidence>
<evidence type="ECO:0000269" key="4">
    <source>
    </source>
</evidence>
<evidence type="ECO:0000269" key="5">
    <source>
    </source>
</evidence>
<evidence type="ECO:0000305" key="6"/>
<protein>
    <recommendedName>
        <fullName>AT-rich interactive domain-containing protein cfi-1</fullName>
    </recommendedName>
    <alternativeName>
        <fullName>ARID domain-containing protein CFI-1</fullName>
    </alternativeName>
</protein>
<accession>O02326</accession>
<accession>Q8T628</accession>
<keyword id="KW-0217">Developmental protein</keyword>
<keyword id="KW-0238">DNA-binding</keyword>
<keyword id="KW-0539">Nucleus</keyword>
<keyword id="KW-1185">Reference proteome</keyword>
<keyword id="KW-0804">Transcription</keyword>
<keyword id="KW-0805">Transcription regulation</keyword>
<sequence length="467" mass="51790">MSVRIDEPQLFVSMSKEPTQETVNVGGHHDDSSSNCDERVDDQTEEQKSPPASPDLTANLNVFDLESRQKVVQRLLNSQLNLSNLRAPLNLPPIFQALQGPFSIQQQLLGLASGLTAISPGLDDYDEENTNQGEPEDLTLGGFRKETSVKSEEPSESGINASGPAWSYEEQFKQLYELSDDVKRKEWLDDWLNFMHRIGKPVTRIPIMAKQVLDLYELYRLVVQHGGLVEIINKKLWREITKGLNLPSSITSAAFTLRTQYQKYLYDYECEKEKLSNQSDLQQAIDGNRREAPGRRTAPSFPLPFQLPHAASAAATMLNNQLNGLGMRNDLLDDENTLSLQASGLFGTSYGAEQMAILEAHQRNLERAQRAVQQQVARQSLGLTACSNGNGGNIHNSGRESTSSNDSDIPAKRPKLENDVKTNGASSMRISTKHSDNSKTSMSVSMEINGITYQGVLFALDETVSES</sequence>
<reference key="1">
    <citation type="journal article" date="2002" name="Genes Dev.">
        <title>Control of neuronal subtype identity by the C. elegans ARID protein CFI-1.</title>
        <authorList>
            <person name="Shaham S."/>
            <person name="Bargmann C.I."/>
        </authorList>
    </citation>
    <scope>NUCLEOTIDE SEQUENCE [MRNA]</scope>
    <scope>FUNCTION</scope>
    <scope>DNA-BINDING</scope>
    <scope>SUBCELLULAR LOCATION</scope>
    <scope>TISSUE SPECIFICITY</scope>
    <scope>INDUCTION</scope>
    <source>
        <strain>Bristol N2</strain>
    </source>
</reference>
<reference key="2">
    <citation type="journal article" date="1998" name="Science">
        <title>Genome sequence of the nematode C. elegans: a platform for investigating biology.</title>
        <authorList>
            <consortium name="The C. elegans sequencing consortium"/>
        </authorList>
    </citation>
    <scope>NUCLEOTIDE SEQUENCE [LARGE SCALE GENOMIC DNA]</scope>
    <source>
        <strain>Bristol N2</strain>
    </source>
</reference>
<reference evidence="6" key="3">
    <citation type="journal article" date="2017" name="Neuron">
        <title>Diversification of C. elegans Motor Neuron Identity via Selective Effector Gene Repression.</title>
        <authorList>
            <person name="Kerk S.Y."/>
            <person name="Kratsios P."/>
            <person name="Hart M."/>
            <person name="Mourao R."/>
            <person name="Hobert O."/>
        </authorList>
    </citation>
    <scope>FUNCTION</scope>
    <scope>DEVELOPMENTAL STAGE</scope>
    <scope>MUTAGENESIS OF 39-ARG--SER-467</scope>
</reference>
<dbReference type="EMBL" id="AF487547">
    <property type="protein sequence ID" value="AAL93258.1"/>
    <property type="molecule type" value="mRNA"/>
</dbReference>
<dbReference type="EMBL" id="Z81128">
    <property type="protein sequence ID" value="CAB03395.3"/>
    <property type="molecule type" value="Genomic_DNA"/>
</dbReference>
<dbReference type="EMBL" id="AL023824">
    <property type="protein sequence ID" value="CAB03395.3"/>
    <property type="status" value="JOINED"/>
    <property type="molecule type" value="Genomic_DNA"/>
</dbReference>
<dbReference type="EMBL" id="Z81033">
    <property type="protein sequence ID" value="CAB03395.3"/>
    <property type="status" value="JOINED"/>
    <property type="molecule type" value="Genomic_DNA"/>
</dbReference>
<dbReference type="PIR" id="T25159">
    <property type="entry name" value="T25159"/>
</dbReference>
<dbReference type="RefSeq" id="NP_492644.2">
    <property type="nucleotide sequence ID" value="NM_060243.2"/>
</dbReference>
<dbReference type="SMR" id="O02326"/>
<dbReference type="FunCoup" id="O02326">
    <property type="interactions" value="953"/>
</dbReference>
<dbReference type="STRING" id="6239.T23D8.8.1"/>
<dbReference type="iPTMnet" id="O02326"/>
<dbReference type="PaxDb" id="6239-T23D8.8"/>
<dbReference type="PeptideAtlas" id="O02326"/>
<dbReference type="EnsemblMetazoa" id="T23D8.8.1">
    <property type="protein sequence ID" value="T23D8.8.1"/>
    <property type="gene ID" value="WBGene00000476"/>
</dbReference>
<dbReference type="GeneID" id="188793"/>
<dbReference type="KEGG" id="cel:CELE_T23D8.8"/>
<dbReference type="UCSC" id="T23D8.8">
    <property type="organism name" value="c. elegans"/>
</dbReference>
<dbReference type="AGR" id="WB:WBGene00000476"/>
<dbReference type="CTD" id="188793"/>
<dbReference type="WormBase" id="T23D8.8">
    <property type="protein sequence ID" value="CE31068"/>
    <property type="gene ID" value="WBGene00000476"/>
    <property type="gene designation" value="cfi-1"/>
</dbReference>
<dbReference type="eggNOG" id="KOG2744">
    <property type="taxonomic scope" value="Eukaryota"/>
</dbReference>
<dbReference type="GeneTree" id="ENSGT00940000169348"/>
<dbReference type="HOGENOM" id="CLU_567702_0_0_1"/>
<dbReference type="InParanoid" id="O02326"/>
<dbReference type="OMA" id="NFMHRIG"/>
<dbReference type="OrthoDB" id="10044343at2759"/>
<dbReference type="PhylomeDB" id="O02326"/>
<dbReference type="PRO" id="PR:O02326"/>
<dbReference type="Proteomes" id="UP000001940">
    <property type="component" value="Chromosome I"/>
</dbReference>
<dbReference type="Bgee" id="WBGene00000476">
    <property type="expression patterns" value="Expressed in pharyngeal muscle cell (C elegans) and 3 other cell types or tissues"/>
</dbReference>
<dbReference type="GO" id="GO:0005634">
    <property type="term" value="C:nucleus"/>
    <property type="evidence" value="ECO:0000314"/>
    <property type="project" value="WormBase"/>
</dbReference>
<dbReference type="GO" id="GO:0003677">
    <property type="term" value="F:DNA binding"/>
    <property type="evidence" value="ECO:0000318"/>
    <property type="project" value="GO_Central"/>
</dbReference>
<dbReference type="GO" id="GO:0043565">
    <property type="term" value="F:sequence-specific DNA binding"/>
    <property type="evidence" value="ECO:0000314"/>
    <property type="project" value="WormBase"/>
</dbReference>
<dbReference type="GO" id="GO:0045165">
    <property type="term" value="P:cell fate commitment"/>
    <property type="evidence" value="ECO:0000315"/>
    <property type="project" value="WormBase"/>
</dbReference>
<dbReference type="GO" id="GO:0001708">
    <property type="term" value="P:cell fate specification"/>
    <property type="evidence" value="ECO:0000315"/>
    <property type="project" value="UniProtKB"/>
</dbReference>
<dbReference type="GO" id="GO:0000122">
    <property type="term" value="P:negative regulation of transcription by RNA polymerase II"/>
    <property type="evidence" value="ECO:0000315"/>
    <property type="project" value="UniProtKB"/>
</dbReference>
<dbReference type="GO" id="GO:0030182">
    <property type="term" value="P:neuron differentiation"/>
    <property type="evidence" value="ECO:0000315"/>
    <property type="project" value="WormBase"/>
</dbReference>
<dbReference type="GO" id="GO:0048665">
    <property type="term" value="P:neuron fate specification"/>
    <property type="evidence" value="ECO:0000316"/>
    <property type="project" value="UniProtKB"/>
</dbReference>
<dbReference type="GO" id="GO:0045944">
    <property type="term" value="P:positive regulation of transcription by RNA polymerase II"/>
    <property type="evidence" value="ECO:0000315"/>
    <property type="project" value="WormBase"/>
</dbReference>
<dbReference type="GO" id="GO:0006357">
    <property type="term" value="P:regulation of transcription by RNA polymerase II"/>
    <property type="evidence" value="ECO:0000318"/>
    <property type="project" value="GO_Central"/>
</dbReference>
<dbReference type="CDD" id="cd16867">
    <property type="entry name" value="ARID_ARID3"/>
    <property type="match status" value="1"/>
</dbReference>
<dbReference type="FunFam" id="1.10.150.60:FF:000007">
    <property type="entry name" value="AT-rich interactive domain-containing protein 3C"/>
    <property type="match status" value="1"/>
</dbReference>
<dbReference type="Gene3D" id="1.10.150.60">
    <property type="entry name" value="ARID DNA-binding domain"/>
    <property type="match status" value="1"/>
</dbReference>
<dbReference type="InterPro" id="IPR045147">
    <property type="entry name" value="ARI3A/B/C"/>
</dbReference>
<dbReference type="InterPro" id="IPR001606">
    <property type="entry name" value="ARID_dom"/>
</dbReference>
<dbReference type="InterPro" id="IPR036431">
    <property type="entry name" value="ARID_dom_sf"/>
</dbReference>
<dbReference type="InterPro" id="IPR023334">
    <property type="entry name" value="REKLES_domain"/>
</dbReference>
<dbReference type="PANTHER" id="PTHR15348">
    <property type="entry name" value="AT-RICH INTERACTIVE DOMAIN-CONTAINING PROTEIN ARID DOMAIN- CONTAINING PROTEIN DEAD RINGER PROTEIN B-CELL REGULATOR OF IGH TRANSCRIPTION BRIGHT"/>
    <property type="match status" value="1"/>
</dbReference>
<dbReference type="PANTHER" id="PTHR15348:SF0">
    <property type="entry name" value="PROTEIN DEAD RINGER"/>
    <property type="match status" value="1"/>
</dbReference>
<dbReference type="Pfam" id="PF01388">
    <property type="entry name" value="ARID"/>
    <property type="match status" value="1"/>
</dbReference>
<dbReference type="SMART" id="SM01014">
    <property type="entry name" value="ARID"/>
    <property type="match status" value="1"/>
</dbReference>
<dbReference type="SMART" id="SM00501">
    <property type="entry name" value="BRIGHT"/>
    <property type="match status" value="1"/>
</dbReference>
<dbReference type="SUPFAM" id="SSF46774">
    <property type="entry name" value="ARID-like"/>
    <property type="match status" value="1"/>
</dbReference>
<dbReference type="PROSITE" id="PS51011">
    <property type="entry name" value="ARID"/>
    <property type="match status" value="1"/>
</dbReference>
<dbReference type="PROSITE" id="PS51486">
    <property type="entry name" value="REKLES"/>
    <property type="match status" value="1"/>
</dbReference>
<proteinExistence type="evidence at protein level"/>
<feature type="chain" id="PRO_0000295166" description="AT-rich interactive domain-containing protein cfi-1">
    <location>
        <begin position="1"/>
        <end position="467"/>
    </location>
</feature>
<feature type="domain" description="ARID" evidence="1">
    <location>
        <begin position="181"/>
        <end position="273"/>
    </location>
</feature>
<feature type="domain" description="REKLES" evidence="2">
    <location>
        <begin position="356"/>
        <end position="464"/>
    </location>
</feature>
<feature type="region of interest" description="Disordered" evidence="3">
    <location>
        <begin position="1"/>
        <end position="56"/>
    </location>
</feature>
<feature type="region of interest" description="Disordered" evidence="3">
    <location>
        <begin position="383"/>
        <end position="441"/>
    </location>
</feature>
<feature type="compositionally biased region" description="Basic and acidic residues" evidence="3">
    <location>
        <begin position="27"/>
        <end position="48"/>
    </location>
</feature>
<feature type="compositionally biased region" description="Basic and acidic residues" evidence="3">
    <location>
        <begin position="409"/>
        <end position="420"/>
    </location>
</feature>
<feature type="compositionally biased region" description="Polar residues" evidence="3">
    <location>
        <begin position="421"/>
        <end position="430"/>
    </location>
</feature>
<feature type="mutagenesis site" description="In ot786; Glutamate receptor (GluR) gene glr-4 is ectopically expressed in DA and DB motor neurons." evidence="5">
    <location>
        <begin position="39"/>
        <end position="467"/>
    </location>
</feature>
<gene>
    <name type="primary">cfi-1</name>
    <name type="ORF">T23D8.8</name>
</gene>
<comment type="function">
    <text evidence="4 5">Transcription factor (PubMed:11959845, PubMed:28056346). Regulates neuronal subtype identity (PubMed:11959845, PubMed:28056346). Involved in motor neuron fate determination and maintenance, acting as a transcriptional repressor to counteract gene activation by transcription factor unc-3 in a subset of motor neurons (PubMed:28056346). Probably acts by binding to specific promoter elements (PubMed:28056346). Promotes differentiation of URA sensory neurons and prevents them from expressing male-specific CEM neuronal features (PubMed:11959845). Promotes differentiation of AVD and PVC interneurons and their glutamate receptor expression (PubMed:11959845).</text>
</comment>
<comment type="subcellular location">
    <subcellularLocation>
        <location evidence="1 4">Nucleus</location>
    </subcellularLocation>
</comment>
<comment type="tissue specificity">
    <text evidence="4">Present in IL2 and URA neurons, and in AVD and PVC interneurons. Present in muscles from head and pharynx (at protein level).</text>
</comment>
<comment type="developmental stage">
    <text evidence="4 5">Expressed in mid-late embryo, throughout larval development and in the adult (PubMed:11959845). Expressed in larvae in various motor neurons, including cholinergic DA, DB, VA, and VB, and also GABAergic DD and VD, but not AS or VC, nor in SAB or DA9 motor neurons (PubMed:28056346).</text>
</comment>
<comment type="induction">
    <text evidence="4">By unc-86.</text>
</comment>